<sequence>MGLEAVLEEIREKGRKEADAIRAESKMDSDRILAEADQKVAGIKAEAEEASTKQAARVTAQEISAANLLVKREILNTQKGLLDEVYEGTIAEIAKLPESFHREAIKKLLTEAKKEIPKGKIHCNARDEAAAKAVLAEKEFSGFILGEPAHIDGGILIEGEGGELQIDYSYRTFMNKVWESGLKDASDILFG</sequence>
<gene>
    <name evidence="1" type="primary">atpE</name>
    <name type="ordered locus">Mboo_2348</name>
</gene>
<accession>A7IAV1</accession>
<dbReference type="EMBL" id="CP000780">
    <property type="protein sequence ID" value="ABS56862.1"/>
    <property type="molecule type" value="Genomic_DNA"/>
</dbReference>
<dbReference type="RefSeq" id="WP_012107923.1">
    <property type="nucleotide sequence ID" value="NC_009712.1"/>
</dbReference>
<dbReference type="SMR" id="A7IAV1"/>
<dbReference type="STRING" id="456442.Mboo_2348"/>
<dbReference type="GeneID" id="5411877"/>
<dbReference type="KEGG" id="mbn:Mboo_2348"/>
<dbReference type="eggNOG" id="arCOG00869">
    <property type="taxonomic scope" value="Archaea"/>
</dbReference>
<dbReference type="HOGENOM" id="CLU_120786_0_0_2"/>
<dbReference type="OrthoDB" id="4691at2157"/>
<dbReference type="Proteomes" id="UP000002408">
    <property type="component" value="Chromosome"/>
</dbReference>
<dbReference type="GO" id="GO:0005886">
    <property type="term" value="C:plasma membrane"/>
    <property type="evidence" value="ECO:0007669"/>
    <property type="project" value="UniProtKB-SubCell"/>
</dbReference>
<dbReference type="GO" id="GO:0033178">
    <property type="term" value="C:proton-transporting two-sector ATPase complex, catalytic domain"/>
    <property type="evidence" value="ECO:0007669"/>
    <property type="project" value="InterPro"/>
</dbReference>
<dbReference type="GO" id="GO:0005524">
    <property type="term" value="F:ATP binding"/>
    <property type="evidence" value="ECO:0007669"/>
    <property type="project" value="UniProtKB-UniRule"/>
</dbReference>
<dbReference type="GO" id="GO:0046933">
    <property type="term" value="F:proton-transporting ATP synthase activity, rotational mechanism"/>
    <property type="evidence" value="ECO:0007669"/>
    <property type="project" value="UniProtKB-UniRule"/>
</dbReference>
<dbReference type="GO" id="GO:0046961">
    <property type="term" value="F:proton-transporting ATPase activity, rotational mechanism"/>
    <property type="evidence" value="ECO:0007669"/>
    <property type="project" value="InterPro"/>
</dbReference>
<dbReference type="GO" id="GO:0042777">
    <property type="term" value="P:proton motive force-driven plasma membrane ATP synthesis"/>
    <property type="evidence" value="ECO:0007669"/>
    <property type="project" value="UniProtKB-UniRule"/>
</dbReference>
<dbReference type="Gene3D" id="3.30.2320.30">
    <property type="entry name" value="ATP synthase, E subunit, C-terminal"/>
    <property type="match status" value="1"/>
</dbReference>
<dbReference type="Gene3D" id="1.20.5.620">
    <property type="entry name" value="F1F0 ATP synthase subunit B, membrane domain"/>
    <property type="match status" value="1"/>
</dbReference>
<dbReference type="HAMAP" id="MF_00311">
    <property type="entry name" value="ATP_synth_E_arch"/>
    <property type="match status" value="1"/>
</dbReference>
<dbReference type="InterPro" id="IPR038495">
    <property type="entry name" value="ATPase_E_C"/>
</dbReference>
<dbReference type="InterPro" id="IPR002842">
    <property type="entry name" value="ATPase_V1_Esu"/>
</dbReference>
<dbReference type="Pfam" id="PF01991">
    <property type="entry name" value="vATP-synt_E"/>
    <property type="match status" value="1"/>
</dbReference>
<dbReference type="SUPFAM" id="SSF160527">
    <property type="entry name" value="V-type ATPase subunit E-like"/>
    <property type="match status" value="1"/>
</dbReference>
<protein>
    <recommendedName>
        <fullName evidence="1">A-type ATP synthase subunit E</fullName>
    </recommendedName>
</protein>
<proteinExistence type="inferred from homology"/>
<comment type="function">
    <text evidence="1">Component of the A-type ATP synthase that produces ATP from ADP in the presence of a proton gradient across the membrane.</text>
</comment>
<comment type="subunit">
    <text evidence="1">Has multiple subunits with at least A(3), B(3), C, D, E, F, H, I and proteolipid K(x).</text>
</comment>
<comment type="subcellular location">
    <subcellularLocation>
        <location evidence="1">Cell membrane</location>
        <topology evidence="1">Peripheral membrane protein</topology>
    </subcellularLocation>
</comment>
<comment type="similarity">
    <text evidence="1">Belongs to the V-ATPase E subunit family.</text>
</comment>
<evidence type="ECO:0000255" key="1">
    <source>
        <dbReference type="HAMAP-Rule" id="MF_00311"/>
    </source>
</evidence>
<name>AATE_METB6</name>
<reference key="1">
    <citation type="journal article" date="2015" name="Microbiology">
        <title>Genome of Methanoregula boonei 6A8 reveals adaptations to oligotrophic peatland environments.</title>
        <authorList>
            <person name="Braeuer S."/>
            <person name="Cadillo-Quiroz H."/>
            <person name="Kyrpides N."/>
            <person name="Woyke T."/>
            <person name="Goodwin L."/>
            <person name="Detter C."/>
            <person name="Podell S."/>
            <person name="Yavitt J.B."/>
            <person name="Zinder S.H."/>
        </authorList>
    </citation>
    <scope>NUCLEOTIDE SEQUENCE [LARGE SCALE GENOMIC DNA]</scope>
    <source>
        <strain>DSM 21154 / JCM 14090 / 6A8</strain>
    </source>
</reference>
<organism>
    <name type="scientific">Methanoregula boonei (strain DSM 21154 / JCM 14090 / 6A8)</name>
    <dbReference type="NCBI Taxonomy" id="456442"/>
    <lineage>
        <taxon>Archaea</taxon>
        <taxon>Methanobacteriati</taxon>
        <taxon>Methanobacteriota</taxon>
        <taxon>Stenosarchaea group</taxon>
        <taxon>Methanomicrobia</taxon>
        <taxon>Methanomicrobiales</taxon>
        <taxon>Methanoregulaceae</taxon>
        <taxon>Methanoregula</taxon>
    </lineage>
</organism>
<feature type="chain" id="PRO_1000059410" description="A-type ATP synthase subunit E">
    <location>
        <begin position="1"/>
        <end position="191"/>
    </location>
</feature>
<keyword id="KW-0066">ATP synthesis</keyword>
<keyword id="KW-1003">Cell membrane</keyword>
<keyword id="KW-0375">Hydrogen ion transport</keyword>
<keyword id="KW-0406">Ion transport</keyword>
<keyword id="KW-0472">Membrane</keyword>
<keyword id="KW-1185">Reference proteome</keyword>
<keyword id="KW-0813">Transport</keyword>